<proteinExistence type="evidence at protein level"/>
<comment type="function">
    <text evidence="2">Catalyzes the hydrolysis of the N-glycosidic bond of commonly occurring purine and pyrimidine nucleosides into ribose and the base, but has a preference for inosine and uridine as substrates. Is not active on thymidine and 2'-deoxynucleosides. Functions in purine salvage from the blood of the host, a fundamental pathway since protozoan parasites such as C.fasciculata are incapable of de novo purine biosynthesis.</text>
</comment>
<comment type="catalytic activity">
    <reaction evidence="2">
        <text>inosine + H2O = hypoxanthine + D-ribose</text>
        <dbReference type="Rhea" id="RHEA:16657"/>
        <dbReference type="ChEBI" id="CHEBI:15377"/>
        <dbReference type="ChEBI" id="CHEBI:17368"/>
        <dbReference type="ChEBI" id="CHEBI:17596"/>
        <dbReference type="ChEBI" id="CHEBI:47013"/>
        <dbReference type="EC" id="3.2.2.2"/>
    </reaction>
</comment>
<comment type="catalytic activity">
    <reaction evidence="2">
        <text>uridine + H2O = D-ribose + uracil</text>
        <dbReference type="Rhea" id="RHEA:15577"/>
        <dbReference type="ChEBI" id="CHEBI:15377"/>
        <dbReference type="ChEBI" id="CHEBI:16704"/>
        <dbReference type="ChEBI" id="CHEBI:17568"/>
        <dbReference type="ChEBI" id="CHEBI:47013"/>
        <dbReference type="EC" id="3.2.2.3"/>
    </reaction>
</comment>
<comment type="cofactor">
    <cofactor evidence="1">
        <name>Ca(2+)</name>
        <dbReference type="ChEBI" id="CHEBI:29108"/>
    </cofactor>
</comment>
<comment type="biophysicochemical properties">
    <kinetics>
        <KM evidence="2">380 uM for inosine</KM>
        <KM evidence="2">460 uM for adenosine</KM>
        <KM evidence="2">420 uM for guanosine</KM>
        <KM evidence="2">145 uM for purine riboside</KM>
        <KM evidence="2">1300 uM for 5-methyluridine</KM>
        <KM evidence="2">1220 uM for uridine</KM>
        <KM evidence="2">4700 uM for cytosine</KM>
        <Vmax evidence="2">50.0 umol/min/mg enzyme with inosine as substrate</Vmax>
        <Vmax evidence="2">7.6 umol/min/mg enzyme with adenosine as substrate</Vmax>
        <Vmax evidence="2">70.0 umol/min/mg enzyme with guanosine as substrate</Vmax>
        <Vmax evidence="2">0.03 umol/min/mg enzyme with purine riboside as substrate</Vmax>
        <Vmax evidence="2">380.0 umol/min/mg enzyme with 5-methyluridine as substrate</Vmax>
        <Vmax evidence="2">255.0 umol/min/mg enzyme with uridine as substrate</Vmax>
        <Vmax evidence="2">36.0 umol/min/mg enzyme with cytosine as substrate</Vmax>
        <text evidence="2">kcat is 32 sec(-1) with inosine as substrate. kcat is 243 sec(-1) with 5-methyluridine as substrate.</text>
    </kinetics>
</comment>
<comment type="pathway">
    <text evidence="8">Purine metabolism; purine nucleoside salvage.</text>
</comment>
<comment type="subunit">
    <text evidence="2">Homotetramer.</text>
</comment>
<comment type="mass spectrometry" mass="34194.0" error="4.0" method="Electrospray" evidence="3"/>
<comment type="similarity">
    <text evidence="7">Belongs to the IUNH family.</text>
</comment>
<name>IUNH_CRIFA</name>
<protein>
    <recommendedName>
        <fullName evidence="6">Inosine-uridine preferring nucleoside hydrolase</fullName>
        <shortName evidence="6">IU-NH</shortName>
        <shortName evidence="6">IU-nucleoside hydrolase</shortName>
        <ecNumber evidence="2">3.2.2.2</ecNumber>
        <ecNumber evidence="2">3.2.2.3</ecNumber>
    </recommendedName>
    <alternativeName>
        <fullName evidence="5">Non-specific nucleoside hydrolase</fullName>
    </alternativeName>
</protein>
<reference key="1">
    <citation type="journal article" date="1996" name="Biochemistry">
        <title>Inosine-uridine nucleoside hydrolase from Crithidia fasciculata. Genetic characterization, crystallization, and identification of histidine 241 as a catalytic site residue.</title>
        <authorList>
            <person name="Gopaul D.N."/>
            <person name="Meyer S.L."/>
            <person name="Degano M."/>
            <person name="Sacchettini J.C."/>
            <person name="Schramm V.L."/>
        </authorList>
    </citation>
    <scope>NUCLEOTIDE SEQUENCE [GENOMIC DNA]</scope>
    <scope>PARTIAL PROTEIN SEQUENCE</scope>
    <scope>MASS SPECTROMETRY</scope>
    <scope>MUTAGENESIS</scope>
</reference>
<reference key="2">
    <citation type="journal article" date="1991" name="J. Biol. Chem.">
        <title>Nucleoside hydrolase from Crithidia fasciculata. Metabolic role, purification, specificity, and kinetic mechanism.</title>
        <authorList>
            <person name="Parkin D.W."/>
            <person name="Horenstein B.A."/>
            <person name="Abdulah D.R."/>
            <person name="Estupinan B."/>
            <person name="Schramm V.L."/>
        </authorList>
    </citation>
    <scope>FUNCTION</scope>
    <scope>CATALYTIC ACTIVITY</scope>
    <scope>SUBSTRATE SPECIFICITY</scope>
    <scope>BIOPHYSICOCHEMICAL PROPERTIES</scope>
    <scope>SUBUNIT</scope>
    <scope>PATHWAY</scope>
</reference>
<reference key="3">
    <citation type="journal article" date="1996" name="Biochemistry">
        <title>Three-dimensional structure of the inosine-uridine nucleoside N-ribohydrolase from Crithidia fasciculata.</title>
        <authorList>
            <person name="Degano M."/>
            <person name="Gopaul D.N."/>
            <person name="Scapin G."/>
            <person name="Schramm V.L."/>
            <person name="Sacchettini J.C."/>
        </authorList>
    </citation>
    <scope>X-RAY CRYSTALLOGRAPHY (2.5 ANGSTROMS) IN COMPLEX WITH SUBSTRATE AND CALCIUM IONS</scope>
    <scope>ACTIVE SITE</scope>
</reference>
<accession>Q27546</accession>
<evidence type="ECO:0000250" key="1">
    <source>
        <dbReference type="UniProtKB" id="P83851"/>
    </source>
</evidence>
<evidence type="ECO:0000269" key="2">
    <source>
    </source>
</evidence>
<evidence type="ECO:0000269" key="3">
    <source>
    </source>
</evidence>
<evidence type="ECO:0000269" key="4">
    <source>
    </source>
</evidence>
<evidence type="ECO:0000303" key="5">
    <source>
    </source>
</evidence>
<evidence type="ECO:0000303" key="6">
    <source>
    </source>
</evidence>
<evidence type="ECO:0000305" key="7"/>
<evidence type="ECO:0000305" key="8">
    <source>
    </source>
</evidence>
<evidence type="ECO:0000305" key="9">
    <source>
    </source>
</evidence>
<evidence type="ECO:0007829" key="10">
    <source>
        <dbReference type="PDB" id="1MAS"/>
    </source>
</evidence>
<evidence type="ECO:0007829" key="11">
    <source>
        <dbReference type="PDB" id="2MAS"/>
    </source>
</evidence>
<sequence length="315" mass="34326">MPKKIILDCDPGLDDAVAILLAHGNPEIELLAITTVVGNQTLAKVTRNAQLVADIAGITGVPIAAGCDKPLVRKIMTAGHIHGESGMGTVAYPAEFKNKVDERHAVNLIIDLVMSHEPKTITLVPTGGLTNIAMAARLEPRIVDRVKEVVLMGGGYHEGNATSVAEFNIIIDPEAAHIVFNESWQVTMVGLDLTHQALATPPILQRVKEVDTNPARFMLEIMDYYTKIYQSNRYMAAAAVHDPCAVAYVIDPSVMTTERVPVDIELTGKLTLGMTVADFRNPRPEHCHTQVAVKLDFEKFWGLVLDALERIGDPQ</sequence>
<keyword id="KW-0002">3D-structure</keyword>
<keyword id="KW-0106">Calcium</keyword>
<keyword id="KW-0903">Direct protein sequencing</keyword>
<keyword id="KW-0326">Glycosidase</keyword>
<keyword id="KW-0378">Hydrolase</keyword>
<keyword id="KW-0479">Metal-binding</keyword>
<keyword id="KW-0546">Nucleotide metabolism</keyword>
<organism>
    <name type="scientific">Crithidia fasciculata</name>
    <dbReference type="NCBI Taxonomy" id="5656"/>
    <lineage>
        <taxon>Eukaryota</taxon>
        <taxon>Discoba</taxon>
        <taxon>Euglenozoa</taxon>
        <taxon>Kinetoplastea</taxon>
        <taxon>Metakinetoplastina</taxon>
        <taxon>Trypanosomatida</taxon>
        <taxon>Trypanosomatidae</taxon>
        <taxon>Leishmaniinae</taxon>
        <taxon>Crithidia</taxon>
    </lineage>
</organism>
<feature type="initiator methionine" description="Removed">
    <location>
        <position position="1"/>
    </location>
</feature>
<feature type="chain" id="PRO_0000206810" description="Inosine-uridine preferring nucleoside hydrolase">
    <location>
        <begin position="2"/>
        <end position="315"/>
    </location>
</feature>
<feature type="active site" description="Proton donor" evidence="9">
    <location>
        <position position="241"/>
    </location>
</feature>
<feature type="binding site">
    <location>
        <position position="10"/>
    </location>
    <ligand>
        <name>Ca(2+)</name>
        <dbReference type="ChEBI" id="CHEBI:29108"/>
    </ligand>
</feature>
<feature type="binding site" evidence="4">
    <location>
        <position position="14"/>
    </location>
    <ligand>
        <name>substrate</name>
    </ligand>
</feature>
<feature type="binding site">
    <location>
        <position position="15"/>
    </location>
    <ligand>
        <name>Ca(2+)</name>
        <dbReference type="ChEBI" id="CHEBI:29108"/>
    </ligand>
</feature>
<feature type="binding site">
    <location>
        <position position="126"/>
    </location>
    <ligand>
        <name>Ca(2+)</name>
        <dbReference type="ChEBI" id="CHEBI:29108"/>
    </ligand>
</feature>
<feature type="binding site" evidence="4">
    <location>
        <position position="160"/>
    </location>
    <ligand>
        <name>substrate</name>
    </ligand>
</feature>
<feature type="binding site" evidence="4">
    <location>
        <position position="166"/>
    </location>
    <ligand>
        <name>substrate</name>
    </ligand>
</feature>
<feature type="binding site" evidence="4">
    <location>
        <position position="168"/>
    </location>
    <ligand>
        <name>substrate</name>
    </ligand>
</feature>
<feature type="binding site">
    <location>
        <position position="242"/>
    </location>
    <ligand>
        <name>Ca(2+)</name>
        <dbReference type="ChEBI" id="CHEBI:29108"/>
    </ligand>
</feature>
<feature type="mutagenesis site" description="Loss of activity." evidence="3">
    <original>H</original>
    <variation>A</variation>
    <location>
        <position position="241"/>
    </location>
</feature>
<feature type="strand" evidence="11">
    <location>
        <begin position="3"/>
        <end position="9"/>
    </location>
</feature>
<feature type="helix" evidence="11">
    <location>
        <begin position="13"/>
        <end position="24"/>
    </location>
</feature>
<feature type="strand" evidence="11">
    <location>
        <begin position="28"/>
        <end position="35"/>
    </location>
</feature>
<feature type="strand" evidence="11">
    <location>
        <begin position="37"/>
        <end position="40"/>
    </location>
</feature>
<feature type="helix" evidence="11">
    <location>
        <begin position="42"/>
        <end position="55"/>
    </location>
</feature>
<feature type="strand" evidence="11">
    <location>
        <begin position="63"/>
        <end position="65"/>
    </location>
</feature>
<feature type="strand" evidence="11">
    <location>
        <begin position="71"/>
        <end position="73"/>
    </location>
</feature>
<feature type="helix" evidence="11">
    <location>
        <begin position="79"/>
        <end position="82"/>
    </location>
</feature>
<feature type="strand" evidence="11">
    <location>
        <begin position="84"/>
        <end position="87"/>
    </location>
</feature>
<feature type="helix" evidence="11">
    <location>
        <begin position="105"/>
        <end position="115"/>
    </location>
</feature>
<feature type="strand" evidence="11">
    <location>
        <begin position="121"/>
        <end position="125"/>
    </location>
</feature>
<feature type="helix" evidence="11">
    <location>
        <begin position="130"/>
        <end position="138"/>
    </location>
</feature>
<feature type="helix" evidence="11">
    <location>
        <begin position="142"/>
        <end position="145"/>
    </location>
</feature>
<feature type="strand" evidence="11">
    <location>
        <begin position="148"/>
        <end position="152"/>
    </location>
</feature>
<feature type="strand" evidence="11">
    <location>
        <begin position="160"/>
        <end position="164"/>
    </location>
</feature>
<feature type="helix" evidence="11">
    <location>
        <begin position="167"/>
        <end position="170"/>
    </location>
</feature>
<feature type="helix" evidence="11">
    <location>
        <begin position="173"/>
        <end position="181"/>
    </location>
</feature>
<feature type="strand" evidence="11">
    <location>
        <begin position="182"/>
        <end position="184"/>
    </location>
</feature>
<feature type="strand" evidence="11">
    <location>
        <begin position="186"/>
        <end position="189"/>
    </location>
</feature>
<feature type="helix" evidence="11">
    <location>
        <begin position="191"/>
        <end position="194"/>
    </location>
</feature>
<feature type="helix" evidence="11">
    <location>
        <begin position="201"/>
        <end position="208"/>
    </location>
</feature>
<feature type="helix" evidence="11">
    <location>
        <begin position="213"/>
        <end position="230"/>
    </location>
</feature>
<feature type="strand" evidence="11">
    <location>
        <begin position="236"/>
        <end position="239"/>
    </location>
</feature>
<feature type="helix" evidence="11">
    <location>
        <begin position="242"/>
        <end position="250"/>
    </location>
</feature>
<feature type="helix" evidence="11">
    <location>
        <begin position="252"/>
        <end position="254"/>
    </location>
</feature>
<feature type="strand" evidence="11">
    <location>
        <begin position="255"/>
        <end position="259"/>
    </location>
</feature>
<feature type="strand" evidence="11">
    <location>
        <begin position="262"/>
        <end position="264"/>
    </location>
</feature>
<feature type="turn" evidence="10">
    <location>
        <begin position="269"/>
        <end position="273"/>
    </location>
</feature>
<feature type="strand" evidence="11">
    <location>
        <begin position="275"/>
        <end position="277"/>
    </location>
</feature>
<feature type="strand" evidence="11">
    <location>
        <begin position="288"/>
        <end position="295"/>
    </location>
</feature>
<feature type="helix" evidence="11">
    <location>
        <begin position="297"/>
        <end position="311"/>
    </location>
</feature>
<dbReference type="EC" id="3.2.2.2" evidence="2"/>
<dbReference type="EC" id="3.2.2.3" evidence="2"/>
<dbReference type="EMBL" id="U43371">
    <property type="protein sequence ID" value="AAC47119.1"/>
    <property type="molecule type" value="Genomic_DNA"/>
</dbReference>
<dbReference type="PDB" id="1MAS">
    <property type="method" value="X-ray"/>
    <property type="resolution" value="2.50 A"/>
    <property type="chains" value="A/B=3-315"/>
</dbReference>
<dbReference type="PDB" id="2MAS">
    <property type="method" value="X-ray"/>
    <property type="resolution" value="2.30 A"/>
    <property type="chains" value="A/B/C/D=3-315"/>
</dbReference>
<dbReference type="PDBsum" id="1MAS"/>
<dbReference type="PDBsum" id="2MAS"/>
<dbReference type="SMR" id="Q27546"/>
<dbReference type="BindingDB" id="Q27546"/>
<dbReference type="ChEMBL" id="CHEMBL3826862"/>
<dbReference type="KEGG" id="ag:AAC47119"/>
<dbReference type="VEuPathDB" id="TriTrypDB:CFAC1_140027700"/>
<dbReference type="BRENDA" id="3.2.2.3">
    <property type="organism ID" value="1365"/>
</dbReference>
<dbReference type="UniPathway" id="UPA00606"/>
<dbReference type="EvolutionaryTrace" id="Q27546"/>
<dbReference type="GO" id="GO:0005829">
    <property type="term" value="C:cytosol"/>
    <property type="evidence" value="ECO:0007669"/>
    <property type="project" value="TreeGrafter"/>
</dbReference>
<dbReference type="GO" id="GO:0047724">
    <property type="term" value="F:inosine nucleosidase activity"/>
    <property type="evidence" value="ECO:0007669"/>
    <property type="project" value="UniProtKB-EC"/>
</dbReference>
<dbReference type="GO" id="GO:0046872">
    <property type="term" value="F:metal ion binding"/>
    <property type="evidence" value="ECO:0007669"/>
    <property type="project" value="UniProtKB-KW"/>
</dbReference>
<dbReference type="GO" id="GO:0045437">
    <property type="term" value="F:uridine nucleosidase activity"/>
    <property type="evidence" value="ECO:0007669"/>
    <property type="project" value="UniProtKB-EC"/>
</dbReference>
<dbReference type="GO" id="GO:0009117">
    <property type="term" value="P:nucleotide metabolic process"/>
    <property type="evidence" value="ECO:0007669"/>
    <property type="project" value="UniProtKB-KW"/>
</dbReference>
<dbReference type="GO" id="GO:0006152">
    <property type="term" value="P:purine nucleoside catabolic process"/>
    <property type="evidence" value="ECO:0007669"/>
    <property type="project" value="TreeGrafter"/>
</dbReference>
<dbReference type="CDD" id="cd02651">
    <property type="entry name" value="nuc_hydro_IU_UC_XIUA"/>
    <property type="match status" value="1"/>
</dbReference>
<dbReference type="Gene3D" id="3.90.245.10">
    <property type="entry name" value="Ribonucleoside hydrolase-like"/>
    <property type="match status" value="1"/>
</dbReference>
<dbReference type="InterPro" id="IPR015910">
    <property type="entry name" value="I/U_nuclsd_hydro_CS"/>
</dbReference>
<dbReference type="InterPro" id="IPR001910">
    <property type="entry name" value="Inosine/uridine_hydrolase_dom"/>
</dbReference>
<dbReference type="InterPro" id="IPR023186">
    <property type="entry name" value="IUNH"/>
</dbReference>
<dbReference type="InterPro" id="IPR036452">
    <property type="entry name" value="Ribo_hydro-like"/>
</dbReference>
<dbReference type="PANTHER" id="PTHR12304">
    <property type="entry name" value="INOSINE-URIDINE PREFERRING NUCLEOSIDE HYDROLASE"/>
    <property type="match status" value="1"/>
</dbReference>
<dbReference type="PANTHER" id="PTHR12304:SF4">
    <property type="entry name" value="URIDINE NUCLEOSIDASE"/>
    <property type="match status" value="1"/>
</dbReference>
<dbReference type="Pfam" id="PF01156">
    <property type="entry name" value="IU_nuc_hydro"/>
    <property type="match status" value="1"/>
</dbReference>
<dbReference type="SUPFAM" id="SSF53590">
    <property type="entry name" value="Nucleoside hydrolase"/>
    <property type="match status" value="1"/>
</dbReference>
<dbReference type="PROSITE" id="PS01247">
    <property type="entry name" value="IUNH"/>
    <property type="match status" value="1"/>
</dbReference>
<gene>
    <name type="primary">IUNH</name>
</gene>